<feature type="signal peptide" evidence="3">
    <location>
        <begin position="1"/>
        <end position="18"/>
    </location>
</feature>
<feature type="chain" id="PRO_0000454006" description="Apolipoprotein E">
    <location>
        <begin position="19"/>
        <end position="312"/>
    </location>
</feature>
<feature type="repeat" description="1">
    <location>
        <begin position="72"/>
        <end position="93"/>
    </location>
</feature>
<feature type="repeat" description="2">
    <location>
        <begin position="94"/>
        <end position="115"/>
    </location>
</feature>
<feature type="repeat" description="3">
    <location>
        <begin position="116"/>
        <end position="137"/>
    </location>
</feature>
<feature type="repeat" description="4">
    <location>
        <begin position="138"/>
        <end position="159"/>
    </location>
</feature>
<feature type="repeat" description="5">
    <location>
        <begin position="160"/>
        <end position="181"/>
    </location>
</feature>
<feature type="repeat" description="6">
    <location>
        <begin position="182"/>
        <end position="203"/>
    </location>
</feature>
<feature type="repeat" description="7">
    <location>
        <begin position="204"/>
        <end position="225"/>
    </location>
</feature>
<feature type="repeat" description="8">
    <location>
        <begin position="226"/>
        <end position="247"/>
    </location>
</feature>
<feature type="region of interest" description="8 X 22 AA approximate tandem repeats">
    <location>
        <begin position="72"/>
        <end position="247"/>
    </location>
</feature>
<feature type="region of interest" description="LDL and other lipoprotein receptors binding" evidence="1">
    <location>
        <begin position="150"/>
        <end position="160"/>
    </location>
</feature>
<feature type="region of interest" description="LDL receptor binding" evidence="1">
    <location>
        <begin position="150"/>
        <end position="160"/>
    </location>
</feature>
<feature type="region of interest" description="Lipid-binding and lipoprotein association" evidence="1">
    <location>
        <begin position="202"/>
        <end position="282"/>
    </location>
</feature>
<feature type="region of interest" description="Homooligomerization" evidence="1">
    <location>
        <begin position="258"/>
        <end position="312"/>
    </location>
</feature>
<feature type="region of interest" description="Specificity for association with VLDL" evidence="1">
    <location>
        <begin position="270"/>
        <end position="282"/>
    </location>
</feature>
<feature type="binding site" evidence="1">
    <location>
        <begin position="154"/>
        <end position="157"/>
    </location>
    <ligand>
        <name>heparin</name>
        <dbReference type="ChEBI" id="CHEBI:28304"/>
    </ligand>
</feature>
<feature type="binding site" evidence="1">
    <location>
        <begin position="221"/>
        <end position="228"/>
    </location>
    <ligand>
        <name>heparin</name>
        <dbReference type="ChEBI" id="CHEBI:28304"/>
    </ligand>
</feature>
<feature type="modified residue" description="Methionine sulfoxide" evidence="2">
    <location>
        <position position="135"/>
    </location>
</feature>
<evidence type="ECO:0000250" key="1">
    <source>
        <dbReference type="UniProtKB" id="P02649"/>
    </source>
</evidence>
<evidence type="ECO:0000250" key="2">
    <source>
        <dbReference type="UniProtKB" id="P08226"/>
    </source>
</evidence>
<evidence type="ECO:0000255" key="3"/>
<evidence type="ECO:0000305" key="4"/>
<sequence>MKALWAVLLATLLTGCLAEGEPEVTDQLSWQSNQPWEQALNRFWDYLRWVQTLSDQVQEELQNSQVTQELTVLMEDTMTEVKAYKKELEEQLGPVAEETRARLAKEVQAAQARLGADMEDLRNRLGQYRNEVHTMLGQNTEELRSRLSTHLRKMRKRLMRDAEDLQKRLAVYKAGAREGAERGVSAIRERLGPLVEQGRQRTANLGAGAAQPLRDRAQALSERLRGRLEEVGNQARDRLEEMREHMEEVRSKMEEQTQQIRLQAEIFQARLKSWFEPLVEDMHRQLANLVEKIQSSVATNSVLSTSVPQENQ</sequence>
<proteinExistence type="inferred from homology"/>
<name>APOE_ARVNI</name>
<protein>
    <recommendedName>
        <fullName>Apolipoprotein E</fullName>
        <shortName>Apo-E</shortName>
    </recommendedName>
</protein>
<reference key="1">
    <citation type="submission" date="2020-02" db="EMBL/GenBank/DDBJ databases">
        <title>Arvicanthis niloticus (Nile rat) genome, mArvNil1, paternal haplotype with X.</title>
        <authorList>
            <person name="Bukhman Y."/>
            <person name="Toh H."/>
            <person name="Tracey A."/>
            <person name="Chow W."/>
            <person name="Mountcastle J."/>
            <person name="Haase B."/>
            <person name="Formenti G."/>
            <person name="Rhie A."/>
            <person name="Fedrigo O."/>
            <person name="Jarvis E.D."/>
            <person name="Stewart R."/>
            <person name="Thomson J."/>
        </authorList>
    </citation>
    <scope>NUCLEOTIDE SEQUENCE [LARGE SCALE GENOMIC DNA]</scope>
</reference>
<reference key="2">
    <citation type="unpublished observations" date="2021-07">
        <authorList>
            <person name="Puppione D.L."/>
        </authorList>
    </citation>
    <scope>IDENTIFICATION</scope>
</reference>
<organism>
    <name type="scientific">Arvicanthis niloticus</name>
    <name type="common">African grass rat</name>
    <dbReference type="NCBI Taxonomy" id="61156"/>
    <lineage>
        <taxon>Eukaryota</taxon>
        <taxon>Metazoa</taxon>
        <taxon>Chordata</taxon>
        <taxon>Craniata</taxon>
        <taxon>Vertebrata</taxon>
        <taxon>Euteleostomi</taxon>
        <taxon>Mammalia</taxon>
        <taxon>Eutheria</taxon>
        <taxon>Euarchontoglires</taxon>
        <taxon>Glires</taxon>
        <taxon>Rodentia</taxon>
        <taxon>Myomorpha</taxon>
        <taxon>Muroidea</taxon>
        <taxon>Muridae</taxon>
        <taxon>Murinae</taxon>
        <taxon>Arvicanthis</taxon>
    </lineage>
</organism>
<dbReference type="EMBL" id="JAAOMG010000004">
    <property type="status" value="NOT_ANNOTATED_CDS"/>
    <property type="molecule type" value="Genomic_DNA"/>
</dbReference>
<dbReference type="RefSeq" id="XP_034355263.1">
    <property type="nucleotide sequence ID" value="XM_034499372.1"/>
</dbReference>
<dbReference type="SMR" id="P0DUY2"/>
<dbReference type="GeneID" id="117706532"/>
<dbReference type="OrthoDB" id="9048614at2759"/>
<dbReference type="GO" id="GO:0042627">
    <property type="term" value="C:chylomicron"/>
    <property type="evidence" value="ECO:0007669"/>
    <property type="project" value="UniProtKB-KW"/>
</dbReference>
<dbReference type="GO" id="GO:0070062">
    <property type="term" value="C:extracellular exosome"/>
    <property type="evidence" value="ECO:0000250"/>
    <property type="project" value="UniProtKB"/>
</dbReference>
<dbReference type="GO" id="GO:0034364">
    <property type="term" value="C:high-density lipoprotein particle"/>
    <property type="evidence" value="ECO:0007669"/>
    <property type="project" value="UniProtKB-KW"/>
</dbReference>
<dbReference type="GO" id="GO:0034362">
    <property type="term" value="C:low-density lipoprotein particle"/>
    <property type="evidence" value="ECO:0007669"/>
    <property type="project" value="TreeGrafter"/>
</dbReference>
<dbReference type="GO" id="GO:0097487">
    <property type="term" value="C:multivesicular body, internal vesicle"/>
    <property type="evidence" value="ECO:0000250"/>
    <property type="project" value="UniProtKB"/>
</dbReference>
<dbReference type="GO" id="GO:0034361">
    <property type="term" value="C:very-low-density lipoprotein particle"/>
    <property type="evidence" value="ECO:0007669"/>
    <property type="project" value="UniProtKB-KW"/>
</dbReference>
<dbReference type="GO" id="GO:0120020">
    <property type="term" value="F:cholesterol transfer activity"/>
    <property type="evidence" value="ECO:0007669"/>
    <property type="project" value="TreeGrafter"/>
</dbReference>
<dbReference type="GO" id="GO:0008201">
    <property type="term" value="F:heparin binding"/>
    <property type="evidence" value="ECO:0007669"/>
    <property type="project" value="UniProtKB-KW"/>
</dbReference>
<dbReference type="GO" id="GO:0060228">
    <property type="term" value="F:phosphatidylcholine-sterol O-acyltransferase activator activity"/>
    <property type="evidence" value="ECO:0007669"/>
    <property type="project" value="TreeGrafter"/>
</dbReference>
<dbReference type="GO" id="GO:0005543">
    <property type="term" value="F:phospholipid binding"/>
    <property type="evidence" value="ECO:0007669"/>
    <property type="project" value="TreeGrafter"/>
</dbReference>
<dbReference type="GO" id="GO:0055090">
    <property type="term" value="P:acylglycerol homeostasis"/>
    <property type="evidence" value="ECO:0007669"/>
    <property type="project" value="TreeGrafter"/>
</dbReference>
<dbReference type="GO" id="GO:0033344">
    <property type="term" value="P:cholesterol efflux"/>
    <property type="evidence" value="ECO:0007669"/>
    <property type="project" value="TreeGrafter"/>
</dbReference>
<dbReference type="GO" id="GO:0008203">
    <property type="term" value="P:cholesterol metabolic process"/>
    <property type="evidence" value="ECO:0007669"/>
    <property type="project" value="TreeGrafter"/>
</dbReference>
<dbReference type="GO" id="GO:0042157">
    <property type="term" value="P:lipoprotein metabolic process"/>
    <property type="evidence" value="ECO:0007669"/>
    <property type="project" value="InterPro"/>
</dbReference>
<dbReference type="GO" id="GO:0032438">
    <property type="term" value="P:melanosome organization"/>
    <property type="evidence" value="ECO:0000250"/>
    <property type="project" value="UniProtKB"/>
</dbReference>
<dbReference type="GO" id="GO:0033700">
    <property type="term" value="P:phospholipid efflux"/>
    <property type="evidence" value="ECO:0007669"/>
    <property type="project" value="TreeGrafter"/>
</dbReference>
<dbReference type="FunFam" id="1.20.120.20:FF:000002">
    <property type="entry name" value="Apolipoprotein E"/>
    <property type="match status" value="1"/>
</dbReference>
<dbReference type="FunFam" id="1.20.120.20:FF:000003">
    <property type="entry name" value="Apolipoprotein E"/>
    <property type="match status" value="1"/>
</dbReference>
<dbReference type="Gene3D" id="1.20.120.20">
    <property type="entry name" value="Apolipoprotein"/>
    <property type="match status" value="2"/>
</dbReference>
<dbReference type="InterPro" id="IPR000074">
    <property type="entry name" value="ApoA_E"/>
</dbReference>
<dbReference type="InterPro" id="IPR050163">
    <property type="entry name" value="Apolipoprotein_A1/A4/E"/>
</dbReference>
<dbReference type="PANTHER" id="PTHR18976">
    <property type="entry name" value="APOLIPOPROTEIN"/>
    <property type="match status" value="1"/>
</dbReference>
<dbReference type="PANTHER" id="PTHR18976:SF2">
    <property type="entry name" value="APOLIPOPROTEIN E"/>
    <property type="match status" value="1"/>
</dbReference>
<dbReference type="Pfam" id="PF01442">
    <property type="entry name" value="Apolipoprotein"/>
    <property type="match status" value="1"/>
</dbReference>
<dbReference type="SUPFAM" id="SSF58113">
    <property type="entry name" value="Apolipoprotein A-I"/>
    <property type="match status" value="1"/>
</dbReference>
<gene>
    <name type="primary">Apoe</name>
</gene>
<keyword id="KW-0162">Chylomicron</keyword>
<keyword id="KW-0967">Endosome</keyword>
<keyword id="KW-0272">Extracellular matrix</keyword>
<keyword id="KW-0325">Glycoprotein</keyword>
<keyword id="KW-0345">HDL</keyword>
<keyword id="KW-0358">Heparin-binding</keyword>
<keyword id="KW-0445">Lipid transport</keyword>
<keyword id="KW-0446">Lipid-binding</keyword>
<keyword id="KW-0558">Oxidation</keyword>
<keyword id="KW-0597">Phosphoprotein</keyword>
<keyword id="KW-0677">Repeat</keyword>
<keyword id="KW-0964">Secreted</keyword>
<keyword id="KW-0732">Signal</keyword>
<keyword id="KW-0813">Transport</keyword>
<keyword id="KW-0850">VLDL</keyword>
<comment type="function">
    <text evidence="1">APOE is an apolipoprotein, a protein associating with lipid particles, that mainly functions in lipoprotein-mediated lipid transport between organs via the plasma and interstitial fluids. APOE is a core component of plasma lipoproteins and is involved in their production, conversion and clearance. Apolipoproteins are amphipathic molecules that interact both with lipids of the lipoprotein particle core and the aqueous environment of the plasma. As such, APOE associates with chylomicrons, chylomicron remnants, very low density lipoproteins (VLDL) and intermediate density lipoproteins (IDL) but shows a preferential binding to high-density lipoproteins (HDL). It also binds a wide range of cellular receptors including the LDL receptor/LDLR, the LDL receptor-related proteins LRP1, LRP2 and LRP8 and the very low-density lipoprotein receptor/VLDLR that mediate the cellular uptake of the APOE-containing lipoprotein particles. Finally, APOE also has a heparin-binding activity and binds heparan-sulfate proteoglycans on the surface of cells, a property that supports the capture and the receptor-mediated uptake of APOE-containing lipoproteins by cells. A main function of APOE is to mediate lipoprotein clearance through the uptake of chylomicrons, VLDLs, and HDLs by hepatocytes. APOE is also involved in the biosynthesis by the liver of VLDLs as well as their uptake by peripheral tissues ensuring the delivery of triglycerides and energy storage in muscle, heart and adipose tissues. By participating in the lipoprotein-mediated distribution of lipids among tissues, APOE plays a critical role in plasma and tissues lipid homeostasis. APOE is also involved in two steps of reverse cholesterol transport, the HDLs-mediated transport of cholesterol from peripheral tissues to the liver, and thereby plays an important role in cholesterol homeostasis. First, it is functionally associated with ABCA1 in the biogenesis of HDLs in tissues. Second, it is enriched in circulating HDLs and mediates their uptake by hepatocytes. APOE also plays an important role in lipid transport in the central nervous system, regulating neuron survival and sprouting.</text>
</comment>
<comment type="subunit">
    <text evidence="1">Homotetramer. May interact with ABCA1; functionally associated with ABCA1 in the biogenesis of HDLs. May interact with APP/A4 amyloid-beta peptide; the interaction is extremely stable in vitro but its physiological significance is unclear. May interact with MAPT. May interact with MAP2. In the cerebrospinal fluid, interacts with secreted SORL1. Interacts with PMEL; this allows the loading of PMEL luminal fragment on ILVs to induce fibril nucleation.</text>
</comment>
<comment type="subcellular location">
    <subcellularLocation>
        <location evidence="1">Secreted</location>
    </subcellularLocation>
    <subcellularLocation>
        <location evidence="1">Secreted</location>
        <location evidence="1">Extracellular space</location>
    </subcellularLocation>
    <subcellularLocation>
        <location evidence="1">Secreted</location>
        <location evidence="1">Extracellular space</location>
        <location evidence="1">Extracellular matrix</location>
    </subcellularLocation>
    <subcellularLocation>
        <location evidence="1">Extracellular vesicle</location>
    </subcellularLocation>
    <subcellularLocation>
        <location evidence="1">Endosome</location>
        <location evidence="1">Multivesicular body</location>
    </subcellularLocation>
    <text evidence="1">In the plasma, APOE is associated with chylomicrons, chylomicrons remnants, VLDL, LDL and HDL lipoproteins. Lipid poor oligomeric APOE is associated with the extracellular matrix in a calcium- and heparan-sulfate proteoglycans-dependent manner. Lipidation induces the release from the extracellular matrix. Colocalizes with CD63 and PMEL at exosomes and in intraluminal vesicles within multivesicular endosomes.</text>
</comment>
<comment type="PTM">
    <text evidence="1">APOE exists as multiple glycosylated and sialylated glycoforms within cells and in plasma. The extent of glycosylation and sialylation are tissue and context specific.</text>
</comment>
<comment type="PTM">
    <text evidence="1">Glycated in plasma VLDL.</text>
</comment>
<comment type="PTM">
    <text evidence="1">Phosphorylated by FAM20C in the extracellular medium.</text>
</comment>
<comment type="similarity">
    <text evidence="4">Belongs to the apolipoprotein A1/A4/E family.</text>
</comment>
<accession>P0DUY2</accession>